<sequence>MEVKIKQVDEVKISRYIIKETMEDWYQFVESDVVIVGAGPSGLSAAYYLAKAGLKTLVFERRLSFGGGIGGGAMLFHKLIIEKPADEILREVNVRLKEVEEGVYVVDSAEFMAKLATAAIDAGAKIIHGVTVDDVIFRENPLRVAGVAVEWTATQMASLHVDPIFISAKAVVDATGHDAEVISVAARKIPELGIVIPGEKSAYSERAEELTVINTGKVAEGLYAAGMAVTEVKGLPRMGPIFGAMVLSGKAVAEEITKDLLKSEIRT</sequence>
<proteinExistence type="inferred from homology"/>
<evidence type="ECO:0000255" key="1">
    <source>
        <dbReference type="HAMAP-Rule" id="MF_00304"/>
    </source>
</evidence>
<comment type="function">
    <text evidence="1">Involved in the biosynthesis of the thiazole moiety of thiamine. Catalyzes the conversion of NAD and glycine to adenosine diphosphate 5-(2-hydroxyethyl)-4-methylthiazole-2-carboxylate (ADT), an adenylated thiazole intermediate, using free sulfide as a source of sulfur.</text>
</comment>
<comment type="catalytic activity">
    <reaction evidence="1">
        <text>hydrogen sulfide + glycine + NAD(+) = ADP-5-ethyl-4-methylthiazole-2-carboxylate + nicotinamide + 3 H2O + H(+)</text>
        <dbReference type="Rhea" id="RHEA:55704"/>
        <dbReference type="ChEBI" id="CHEBI:15377"/>
        <dbReference type="ChEBI" id="CHEBI:15378"/>
        <dbReference type="ChEBI" id="CHEBI:17154"/>
        <dbReference type="ChEBI" id="CHEBI:29919"/>
        <dbReference type="ChEBI" id="CHEBI:57305"/>
        <dbReference type="ChEBI" id="CHEBI:57540"/>
        <dbReference type="ChEBI" id="CHEBI:139151"/>
        <dbReference type="EC" id="2.4.2.59"/>
    </reaction>
</comment>
<comment type="cofactor">
    <cofactor evidence="1">
        <name>Fe(2+)</name>
        <dbReference type="ChEBI" id="CHEBI:29033"/>
    </cofactor>
</comment>
<comment type="pathway">
    <text evidence="1">Cofactor biosynthesis; thiamine diphosphate biosynthesis.</text>
</comment>
<comment type="subunit">
    <text evidence="1">Homooctamer; tetramer of dimers.</text>
</comment>
<comment type="similarity">
    <text evidence="1">Belongs to the THI4 family.</text>
</comment>
<keyword id="KW-0408">Iron</keyword>
<keyword id="KW-0479">Metal-binding</keyword>
<keyword id="KW-0520">NAD</keyword>
<keyword id="KW-0784">Thiamine biosynthesis</keyword>
<keyword id="KW-0808">Transferase</keyword>
<protein>
    <recommendedName>
        <fullName evidence="1">Thiamine thiazole synthase</fullName>
        <ecNumber evidence="1">2.4.2.59</ecNumber>
    </recommendedName>
</protein>
<name>THI4_SACI3</name>
<dbReference type="EC" id="2.4.2.59" evidence="1"/>
<dbReference type="EMBL" id="CP001401">
    <property type="protein sequence ID" value="ACP55661.1"/>
    <property type="molecule type" value="Genomic_DNA"/>
</dbReference>
<dbReference type="RefSeq" id="WP_012713900.1">
    <property type="nucleotide sequence ID" value="NC_012632.1"/>
</dbReference>
<dbReference type="SMR" id="C3N6N6"/>
<dbReference type="KEGG" id="sim:M1627_1786"/>
<dbReference type="HOGENOM" id="CLU_053727_2_0_2"/>
<dbReference type="UniPathway" id="UPA00060"/>
<dbReference type="Proteomes" id="UP000002307">
    <property type="component" value="Chromosome"/>
</dbReference>
<dbReference type="GO" id="GO:0005506">
    <property type="term" value="F:iron ion binding"/>
    <property type="evidence" value="ECO:0007669"/>
    <property type="project" value="UniProtKB-UniRule"/>
</dbReference>
<dbReference type="GO" id="GO:0016763">
    <property type="term" value="F:pentosyltransferase activity"/>
    <property type="evidence" value="ECO:0007669"/>
    <property type="project" value="UniProtKB-UniRule"/>
</dbReference>
<dbReference type="GO" id="GO:0009228">
    <property type="term" value="P:thiamine biosynthetic process"/>
    <property type="evidence" value="ECO:0007669"/>
    <property type="project" value="UniProtKB-KW"/>
</dbReference>
<dbReference type="GO" id="GO:0009229">
    <property type="term" value="P:thiamine diphosphate biosynthetic process"/>
    <property type="evidence" value="ECO:0007669"/>
    <property type="project" value="UniProtKB-UniRule"/>
</dbReference>
<dbReference type="GO" id="GO:0052837">
    <property type="term" value="P:thiazole biosynthetic process"/>
    <property type="evidence" value="ECO:0007669"/>
    <property type="project" value="UniProtKB-UniRule"/>
</dbReference>
<dbReference type="Gene3D" id="3.50.50.60">
    <property type="entry name" value="FAD/NAD(P)-binding domain"/>
    <property type="match status" value="1"/>
</dbReference>
<dbReference type="HAMAP" id="MF_00304">
    <property type="entry name" value="Thi4"/>
    <property type="match status" value="1"/>
</dbReference>
<dbReference type="InterPro" id="IPR036188">
    <property type="entry name" value="FAD/NAD-bd_sf"/>
</dbReference>
<dbReference type="InterPro" id="IPR002922">
    <property type="entry name" value="Thi4_fam"/>
</dbReference>
<dbReference type="InterPro" id="IPR022828">
    <property type="entry name" value="Thi4_prok"/>
</dbReference>
<dbReference type="NCBIfam" id="TIGR00292">
    <property type="entry name" value="sulfide-dependent adenosine diphosphate thiazole synthase"/>
    <property type="match status" value="1"/>
</dbReference>
<dbReference type="PANTHER" id="PTHR43422">
    <property type="entry name" value="THIAMINE THIAZOLE SYNTHASE"/>
    <property type="match status" value="1"/>
</dbReference>
<dbReference type="PANTHER" id="PTHR43422:SF3">
    <property type="entry name" value="THIAMINE THIAZOLE SYNTHASE"/>
    <property type="match status" value="1"/>
</dbReference>
<dbReference type="Pfam" id="PF01946">
    <property type="entry name" value="Thi4"/>
    <property type="match status" value="1"/>
</dbReference>
<dbReference type="PRINTS" id="PR00368">
    <property type="entry name" value="FADPNR"/>
</dbReference>
<dbReference type="PRINTS" id="PR00411">
    <property type="entry name" value="PNDRDTASEI"/>
</dbReference>
<dbReference type="SUPFAM" id="SSF51905">
    <property type="entry name" value="FAD/NAD(P)-binding domain"/>
    <property type="match status" value="1"/>
</dbReference>
<accession>C3N6N6</accession>
<reference key="1">
    <citation type="journal article" date="2009" name="Proc. Natl. Acad. Sci. U.S.A.">
        <title>Biogeography of the Sulfolobus islandicus pan-genome.</title>
        <authorList>
            <person name="Reno M.L."/>
            <person name="Held N.L."/>
            <person name="Fields C.J."/>
            <person name="Burke P.V."/>
            <person name="Whitaker R.J."/>
        </authorList>
    </citation>
    <scope>NUCLEOTIDE SEQUENCE [LARGE SCALE GENOMIC DNA]</scope>
    <source>
        <strain>M.16.27</strain>
    </source>
</reference>
<organism>
    <name type="scientific">Saccharolobus islandicus (strain M.16.27)</name>
    <name type="common">Sulfolobus islandicus</name>
    <dbReference type="NCBI Taxonomy" id="427318"/>
    <lineage>
        <taxon>Archaea</taxon>
        <taxon>Thermoproteota</taxon>
        <taxon>Thermoprotei</taxon>
        <taxon>Sulfolobales</taxon>
        <taxon>Sulfolobaceae</taxon>
        <taxon>Saccharolobus</taxon>
    </lineage>
</organism>
<feature type="chain" id="PRO_1000205005" description="Thiamine thiazole synthase">
    <location>
        <begin position="1"/>
        <end position="267"/>
    </location>
</feature>
<feature type="binding site" description="in other chain" evidence="1">
    <location>
        <position position="41"/>
    </location>
    <ligand>
        <name>NAD(+)</name>
        <dbReference type="ChEBI" id="CHEBI:57540"/>
        <note>ligand shared between two adjacent protomers</note>
    </ligand>
</feature>
<feature type="binding site" description="in other chain" evidence="1">
    <location>
        <begin position="60"/>
        <end position="61"/>
    </location>
    <ligand>
        <name>NAD(+)</name>
        <dbReference type="ChEBI" id="CHEBI:57540"/>
        <note>ligand shared between two adjacent protomers</note>
    </ligand>
</feature>
<feature type="binding site" description="in other chain" evidence="1">
    <location>
        <position position="68"/>
    </location>
    <ligand>
        <name>NAD(+)</name>
        <dbReference type="ChEBI" id="CHEBI:57540"/>
        <note>ligand shared between two adjacent protomers</note>
    </ligand>
</feature>
<feature type="binding site" description="in other chain" evidence="1">
    <location>
        <position position="132"/>
    </location>
    <ligand>
        <name>NAD(+)</name>
        <dbReference type="ChEBI" id="CHEBI:57540"/>
        <note>ligand shared between two adjacent protomers</note>
    </ligand>
</feature>
<feature type="binding site" evidence="1">
    <location>
        <begin position="160"/>
        <end position="162"/>
    </location>
    <ligand>
        <name>NAD(+)</name>
        <dbReference type="ChEBI" id="CHEBI:57540"/>
        <note>ligand shared between two adjacent protomers</note>
    </ligand>
</feature>
<feature type="binding site" evidence="1">
    <location>
        <position position="162"/>
    </location>
    <ligand>
        <name>Fe cation</name>
        <dbReference type="ChEBI" id="CHEBI:24875"/>
        <note>ligand shared between two adjacent protomers</note>
    </ligand>
</feature>
<feature type="binding site" description="in other chain" evidence="1">
    <location>
        <position position="177"/>
    </location>
    <ligand>
        <name>Fe cation</name>
        <dbReference type="ChEBI" id="CHEBI:24875"/>
        <note>ligand shared between two adjacent protomers</note>
    </ligand>
</feature>
<feature type="binding site" description="in other chain" evidence="1">
    <location>
        <position position="227"/>
    </location>
    <ligand>
        <name>NAD(+)</name>
        <dbReference type="ChEBI" id="CHEBI:57540"/>
        <note>ligand shared between two adjacent protomers</note>
    </ligand>
</feature>
<feature type="binding site" evidence="1">
    <location>
        <position position="237"/>
    </location>
    <ligand>
        <name>glycine</name>
        <dbReference type="ChEBI" id="CHEBI:57305"/>
    </ligand>
</feature>
<gene>
    <name evidence="1" type="primary">thi4</name>
    <name type="ordered locus">M1627_1786</name>
</gene>